<keyword id="KW-0963">Cytoplasm</keyword>
<keyword id="KW-0444">Lipid biosynthesis</keyword>
<keyword id="KW-0443">Lipid metabolism</keyword>
<keyword id="KW-0594">Phospholipid biosynthesis</keyword>
<keyword id="KW-1208">Phospholipid metabolism</keyword>
<keyword id="KW-1185">Reference proteome</keyword>
<keyword id="KW-0808">Transferase</keyword>
<name>PLSX_ACHLI</name>
<dbReference type="EC" id="2.3.1.274" evidence="1"/>
<dbReference type="EMBL" id="CP000896">
    <property type="protein sequence ID" value="ABX80853.1"/>
    <property type="molecule type" value="Genomic_DNA"/>
</dbReference>
<dbReference type="RefSeq" id="WP_012242184.1">
    <property type="nucleotide sequence ID" value="NC_010163.1"/>
</dbReference>
<dbReference type="SMR" id="A9NES3"/>
<dbReference type="STRING" id="441768.ACL_0227"/>
<dbReference type="GeneID" id="41338417"/>
<dbReference type="KEGG" id="acl:ACL_0227"/>
<dbReference type="eggNOG" id="COG0416">
    <property type="taxonomic scope" value="Bacteria"/>
</dbReference>
<dbReference type="HOGENOM" id="CLU_039379_1_1_14"/>
<dbReference type="OrthoDB" id="9806408at2"/>
<dbReference type="UniPathway" id="UPA00085"/>
<dbReference type="Proteomes" id="UP000008558">
    <property type="component" value="Chromosome"/>
</dbReference>
<dbReference type="GO" id="GO:0005737">
    <property type="term" value="C:cytoplasm"/>
    <property type="evidence" value="ECO:0007669"/>
    <property type="project" value="UniProtKB-SubCell"/>
</dbReference>
<dbReference type="GO" id="GO:0043811">
    <property type="term" value="F:phosphate:acyl-[acyl carrier protein] acyltransferase activity"/>
    <property type="evidence" value="ECO:0007669"/>
    <property type="project" value="UniProtKB-UniRule"/>
</dbReference>
<dbReference type="GO" id="GO:0006633">
    <property type="term" value="P:fatty acid biosynthetic process"/>
    <property type="evidence" value="ECO:0007669"/>
    <property type="project" value="UniProtKB-UniRule"/>
</dbReference>
<dbReference type="GO" id="GO:0008654">
    <property type="term" value="P:phospholipid biosynthetic process"/>
    <property type="evidence" value="ECO:0007669"/>
    <property type="project" value="UniProtKB-KW"/>
</dbReference>
<dbReference type="Gene3D" id="3.40.718.10">
    <property type="entry name" value="Isopropylmalate Dehydrogenase"/>
    <property type="match status" value="1"/>
</dbReference>
<dbReference type="HAMAP" id="MF_00019">
    <property type="entry name" value="PlsX"/>
    <property type="match status" value="1"/>
</dbReference>
<dbReference type="InterPro" id="IPR003664">
    <property type="entry name" value="FA_synthesis"/>
</dbReference>
<dbReference type="InterPro" id="IPR012281">
    <property type="entry name" value="Phospholipid_synth_PlsX-like"/>
</dbReference>
<dbReference type="NCBIfam" id="TIGR00182">
    <property type="entry name" value="plsX"/>
    <property type="match status" value="1"/>
</dbReference>
<dbReference type="PANTHER" id="PTHR30100">
    <property type="entry name" value="FATTY ACID/PHOSPHOLIPID SYNTHESIS PROTEIN PLSX"/>
    <property type="match status" value="1"/>
</dbReference>
<dbReference type="PANTHER" id="PTHR30100:SF1">
    <property type="entry name" value="PHOSPHATE ACYLTRANSFERASE"/>
    <property type="match status" value="1"/>
</dbReference>
<dbReference type="Pfam" id="PF02504">
    <property type="entry name" value="FA_synthesis"/>
    <property type="match status" value="1"/>
</dbReference>
<dbReference type="PIRSF" id="PIRSF002465">
    <property type="entry name" value="Phsphlp_syn_PlsX"/>
    <property type="match status" value="1"/>
</dbReference>
<dbReference type="SUPFAM" id="SSF53659">
    <property type="entry name" value="Isocitrate/Isopropylmalate dehydrogenase-like"/>
    <property type="match status" value="1"/>
</dbReference>
<comment type="function">
    <text evidence="1">Catalyzes the reversible formation of acyl-phosphate (acyl-PO(4)) from acyl-[acyl-carrier-protein] (acyl-ACP). This enzyme utilizes acyl-ACP as fatty acyl donor, but not acyl-CoA.</text>
</comment>
<comment type="catalytic activity">
    <reaction evidence="1">
        <text>a fatty acyl-[ACP] + phosphate = an acyl phosphate + holo-[ACP]</text>
        <dbReference type="Rhea" id="RHEA:42292"/>
        <dbReference type="Rhea" id="RHEA-COMP:9685"/>
        <dbReference type="Rhea" id="RHEA-COMP:14125"/>
        <dbReference type="ChEBI" id="CHEBI:43474"/>
        <dbReference type="ChEBI" id="CHEBI:59918"/>
        <dbReference type="ChEBI" id="CHEBI:64479"/>
        <dbReference type="ChEBI" id="CHEBI:138651"/>
        <dbReference type="EC" id="2.3.1.274"/>
    </reaction>
</comment>
<comment type="pathway">
    <text evidence="1">Lipid metabolism; phospholipid metabolism.</text>
</comment>
<comment type="subunit">
    <text evidence="1">Homodimer. Probably interacts with PlsY.</text>
</comment>
<comment type="subcellular location">
    <subcellularLocation>
        <location evidence="1">Cytoplasm</location>
    </subcellularLocation>
    <text evidence="1">Associated with the membrane possibly through PlsY.</text>
</comment>
<comment type="similarity">
    <text evidence="1">Belongs to the PlsX family.</text>
</comment>
<evidence type="ECO:0000255" key="1">
    <source>
        <dbReference type="HAMAP-Rule" id="MF_00019"/>
    </source>
</evidence>
<gene>
    <name evidence="1" type="primary">plsX</name>
    <name type="ordered locus">ACL_0227</name>
</gene>
<organism>
    <name type="scientific">Acholeplasma laidlawii (strain PG-8A)</name>
    <dbReference type="NCBI Taxonomy" id="441768"/>
    <lineage>
        <taxon>Bacteria</taxon>
        <taxon>Bacillati</taxon>
        <taxon>Mycoplasmatota</taxon>
        <taxon>Mollicutes</taxon>
        <taxon>Acholeplasmatales</taxon>
        <taxon>Acholeplasmataceae</taxon>
        <taxon>Acholeplasma</taxon>
    </lineage>
</organism>
<feature type="chain" id="PRO_1000201885" description="Phosphate acyltransferase">
    <location>
        <begin position="1"/>
        <end position="334"/>
    </location>
</feature>
<protein>
    <recommendedName>
        <fullName evidence="1">Phosphate acyltransferase</fullName>
        <ecNumber evidence="1">2.3.1.274</ecNumber>
    </recommendedName>
    <alternativeName>
        <fullName evidence="1">Acyl-ACP phosphotransacylase</fullName>
    </alternativeName>
    <alternativeName>
        <fullName evidence="1">Acyl-[acyl-carrier-protein]--phosphate acyltransferase</fullName>
    </alternativeName>
    <alternativeName>
        <fullName evidence="1">Phosphate-acyl-ACP acyltransferase</fullName>
    </alternativeName>
</protein>
<reference key="1">
    <citation type="journal article" date="2011" name="J. Bacteriol.">
        <title>Complete genome and proteome of Acholeplasma laidlawii.</title>
        <authorList>
            <person name="Lazarev V.N."/>
            <person name="Levitskii S.A."/>
            <person name="Basovskii Y.I."/>
            <person name="Chukin M.M."/>
            <person name="Akopian T.A."/>
            <person name="Vereshchagin V.V."/>
            <person name="Kostrjukova E.S."/>
            <person name="Kovaleva G.Y."/>
            <person name="Kazanov M.D."/>
            <person name="Malko D.B."/>
            <person name="Vitreschak A.G."/>
            <person name="Sernova N.V."/>
            <person name="Gelfand M.S."/>
            <person name="Demina I.A."/>
            <person name="Serebryakova M.V."/>
            <person name="Galyamina M.A."/>
            <person name="Vtyurin N.N."/>
            <person name="Rogov S.I."/>
            <person name="Alexeev D.G."/>
            <person name="Ladygina V.G."/>
            <person name="Govorun V.M."/>
        </authorList>
    </citation>
    <scope>NUCLEOTIDE SEQUENCE [LARGE SCALE GENOMIC DNA]</scope>
    <source>
        <strain>PG-8A</strain>
    </source>
</reference>
<accession>A9NES3</accession>
<sequence length="334" mass="36477">MIKLAIDGMGGDNAPKEIVEGSILALKQFDDIELTIFGDVDKMKPYLIEHPRLKVVHTPKYFEMGVKDIGRHTLRDDKDTSMLMAINHVKEGLADGVVSSGPTQALIFASFFMIRPMKEMKRVAIAPMVPTVIGKPTILLDAGGNIDAKAEHLLDFAIFSTIALKEVYGVKSPKVGLINIGTEPGKGRDIDKETFELLSKHPLIDFYGNLEPKEILTSDAQILLSDGFTANIVMKTMEGTASALGKILKREIKASFWGKLAAVLFLKKPLKRFKQSMSADEVGGALIAGLDKVVVKAHGSSEAYAFMNAIRQAKTMVSHDVIGKVKNVLRGQDE</sequence>
<proteinExistence type="inferred from homology"/>